<dbReference type="EMBL" id="AF162335">
    <property type="protein sequence ID" value="AAD47639.1"/>
    <property type="molecule type" value="mRNA"/>
</dbReference>
<dbReference type="PhylomeDB" id="P82102"/>
<dbReference type="GO" id="GO:0005576">
    <property type="term" value="C:extracellular region"/>
    <property type="evidence" value="ECO:0007669"/>
    <property type="project" value="UniProtKB-SubCell"/>
</dbReference>
<dbReference type="GO" id="GO:0042742">
    <property type="term" value="P:defense response to bacterium"/>
    <property type="evidence" value="ECO:0007669"/>
    <property type="project" value="UniProtKB-KW"/>
</dbReference>
<dbReference type="GO" id="GO:0050832">
    <property type="term" value="P:defense response to fungus"/>
    <property type="evidence" value="ECO:0007669"/>
    <property type="project" value="UniProtKB-KW"/>
</dbReference>
<dbReference type="GO" id="GO:0031640">
    <property type="term" value="P:killing of cells of another organism"/>
    <property type="evidence" value="ECO:0007669"/>
    <property type="project" value="UniProtKB-KW"/>
</dbReference>
<dbReference type="InterPro" id="IPR019631">
    <property type="entry name" value="Myticin_preproprotein"/>
</dbReference>
<dbReference type="Pfam" id="PF10690">
    <property type="entry name" value="Myticin-prepro"/>
    <property type="match status" value="1"/>
</dbReference>
<accession>P82102</accession>
<keyword id="KW-0044">Antibiotic</keyword>
<keyword id="KW-0929">Antimicrobial</keyword>
<keyword id="KW-0903">Direct protein sequencing</keyword>
<keyword id="KW-1015">Disulfide bond</keyword>
<keyword id="KW-0295">Fungicide</keyword>
<keyword id="KW-0964">Secreted</keyword>
<keyword id="KW-0732">Signal</keyword>
<organism>
    <name type="scientific">Mytilus galloprovincialis</name>
    <name type="common">Mediterranean mussel</name>
    <dbReference type="NCBI Taxonomy" id="29158"/>
    <lineage>
        <taxon>Eukaryota</taxon>
        <taxon>Metazoa</taxon>
        <taxon>Spiralia</taxon>
        <taxon>Lophotrochozoa</taxon>
        <taxon>Mollusca</taxon>
        <taxon>Bivalvia</taxon>
        <taxon>Autobranchia</taxon>
        <taxon>Pteriomorphia</taxon>
        <taxon>Mytilida</taxon>
        <taxon>Mytiloidea</taxon>
        <taxon>Mytilidae</taxon>
        <taxon>Mytilinae</taxon>
        <taxon>Mytilus</taxon>
    </lineage>
</organism>
<evidence type="ECO:0000269" key="1">
    <source>
    </source>
</evidence>
<name>MYNB_MYTGA</name>
<feature type="signal peptide" evidence="1">
    <location>
        <begin position="1"/>
        <end position="20"/>
    </location>
</feature>
<feature type="peptide" id="PRO_0000004996" description="Myticin-B">
    <location>
        <begin position="21"/>
        <end position="60"/>
    </location>
</feature>
<feature type="propeptide" id="PRO_0000004997" description="Removed in mature form">
    <location>
        <begin position="61"/>
        <end position="96"/>
    </location>
</feature>
<reference key="1">
    <citation type="journal article" date="1999" name="Eur. J. Biochem.">
        <title>Myticin, a novel cysteine-rich antimicrobial peptide isolated from hemocytes and plasma of the mussel Mytilus galloprovincialis.</title>
        <authorList>
            <person name="Mitta G."/>
            <person name="Hubert F."/>
            <person name="Noel T."/>
            <person name="Roch P."/>
        </authorList>
    </citation>
    <scope>NUCLEOTIDE SEQUENCE [MRNA]</scope>
    <scope>PROTEIN SEQUENCE OF 21-27</scope>
    <scope>MASS SPECTROMETRY</scope>
    <source>
        <tissue>Hemocyte</tissue>
    </source>
</reference>
<comment type="function">
    <text>Bacteriolytic activity against Gram-positive bacteria M.luteus, B.megaterium and A.viridans and Gram-negative bacteria E.coli D31. Possesses antifungal activity against F.oxysporum.</text>
</comment>
<comment type="subcellular location">
    <subcellularLocation>
        <location>Secreted</location>
    </subcellularLocation>
</comment>
<comment type="tissue specificity">
    <text>Hemocytes.</text>
</comment>
<comment type="PTM">
    <text>Contains four disulfide bonds.</text>
</comment>
<comment type="mass spectrometry"/>
<proteinExistence type="evidence at protein level"/>
<protein>
    <recommendedName>
        <fullName>Myticin-B</fullName>
    </recommendedName>
</protein>
<sequence>MKATMLLAVVVAVFVAGTEAHPHVCTSYYCSKFCGTAGCTRYGCRNLHRGKLCFCLHCSRVKFPFGATQDAKSMNELEYTPIMKSMENLDNGMDML</sequence>